<sequence length="76" mass="8765">MAIGTPAHEFRELNEEELVTRLNEAKEELFNLRFQLATGQLTNNRRLRTVKRDIARIYTVIRERELGLSVVPGAEA</sequence>
<proteinExistence type="inferred from homology"/>
<comment type="similarity">
    <text evidence="1">Belongs to the universal ribosomal protein uL29 family.</text>
</comment>
<name>RL29_CORGB</name>
<organism>
    <name type="scientific">Corynebacterium glutamicum (strain R)</name>
    <dbReference type="NCBI Taxonomy" id="340322"/>
    <lineage>
        <taxon>Bacteria</taxon>
        <taxon>Bacillati</taxon>
        <taxon>Actinomycetota</taxon>
        <taxon>Actinomycetes</taxon>
        <taxon>Mycobacteriales</taxon>
        <taxon>Corynebacteriaceae</taxon>
        <taxon>Corynebacterium</taxon>
    </lineage>
</organism>
<feature type="chain" id="PRO_1000007464" description="Large ribosomal subunit protein uL29">
    <location>
        <begin position="1"/>
        <end position="76"/>
    </location>
</feature>
<reference key="1">
    <citation type="journal article" date="2007" name="Microbiology">
        <title>Comparative analysis of the Corynebacterium glutamicum group and complete genome sequence of strain R.</title>
        <authorList>
            <person name="Yukawa H."/>
            <person name="Omumasaba C.A."/>
            <person name="Nonaka H."/>
            <person name="Kos P."/>
            <person name="Okai N."/>
            <person name="Suzuki N."/>
            <person name="Suda M."/>
            <person name="Tsuge Y."/>
            <person name="Watanabe J."/>
            <person name="Ikeda Y."/>
            <person name="Vertes A.A."/>
            <person name="Inui M."/>
        </authorList>
    </citation>
    <scope>NUCLEOTIDE SEQUENCE [LARGE SCALE GENOMIC DNA]</scope>
    <source>
        <strain>R</strain>
    </source>
</reference>
<protein>
    <recommendedName>
        <fullName evidence="1">Large ribosomal subunit protein uL29</fullName>
    </recommendedName>
    <alternativeName>
        <fullName evidence="2">50S ribosomal protein L29</fullName>
    </alternativeName>
</protein>
<evidence type="ECO:0000255" key="1">
    <source>
        <dbReference type="HAMAP-Rule" id="MF_00374"/>
    </source>
</evidence>
<evidence type="ECO:0000305" key="2"/>
<accession>A4QBI9</accession>
<dbReference type="EMBL" id="AP009044">
    <property type="protein sequence ID" value="BAF53586.1"/>
    <property type="molecule type" value="Genomic_DNA"/>
</dbReference>
<dbReference type="RefSeq" id="WP_003854304.1">
    <property type="nucleotide sequence ID" value="NC_009342.1"/>
</dbReference>
<dbReference type="SMR" id="A4QBI9"/>
<dbReference type="GeneID" id="1021518"/>
<dbReference type="KEGG" id="cgt:cgR_0616"/>
<dbReference type="HOGENOM" id="CLU_158491_3_3_11"/>
<dbReference type="PhylomeDB" id="A4QBI9"/>
<dbReference type="Proteomes" id="UP000006698">
    <property type="component" value="Chromosome"/>
</dbReference>
<dbReference type="GO" id="GO:0022625">
    <property type="term" value="C:cytosolic large ribosomal subunit"/>
    <property type="evidence" value="ECO:0007669"/>
    <property type="project" value="TreeGrafter"/>
</dbReference>
<dbReference type="GO" id="GO:0003735">
    <property type="term" value="F:structural constituent of ribosome"/>
    <property type="evidence" value="ECO:0007669"/>
    <property type="project" value="InterPro"/>
</dbReference>
<dbReference type="GO" id="GO:0006412">
    <property type="term" value="P:translation"/>
    <property type="evidence" value="ECO:0007669"/>
    <property type="project" value="UniProtKB-UniRule"/>
</dbReference>
<dbReference type="CDD" id="cd00427">
    <property type="entry name" value="Ribosomal_L29_HIP"/>
    <property type="match status" value="1"/>
</dbReference>
<dbReference type="FunFam" id="1.10.287.310:FF:000001">
    <property type="entry name" value="50S ribosomal protein L29"/>
    <property type="match status" value="1"/>
</dbReference>
<dbReference type="Gene3D" id="1.10.287.310">
    <property type="match status" value="1"/>
</dbReference>
<dbReference type="HAMAP" id="MF_00374">
    <property type="entry name" value="Ribosomal_uL29"/>
    <property type="match status" value="1"/>
</dbReference>
<dbReference type="InterPro" id="IPR050063">
    <property type="entry name" value="Ribosomal_protein_uL29"/>
</dbReference>
<dbReference type="InterPro" id="IPR001854">
    <property type="entry name" value="Ribosomal_uL29"/>
</dbReference>
<dbReference type="InterPro" id="IPR018254">
    <property type="entry name" value="Ribosomal_uL29_CS"/>
</dbReference>
<dbReference type="InterPro" id="IPR036049">
    <property type="entry name" value="Ribosomal_uL29_sf"/>
</dbReference>
<dbReference type="NCBIfam" id="TIGR00012">
    <property type="entry name" value="L29"/>
    <property type="match status" value="1"/>
</dbReference>
<dbReference type="PANTHER" id="PTHR10916">
    <property type="entry name" value="60S RIBOSOMAL PROTEIN L35/50S RIBOSOMAL PROTEIN L29"/>
    <property type="match status" value="1"/>
</dbReference>
<dbReference type="PANTHER" id="PTHR10916:SF0">
    <property type="entry name" value="LARGE RIBOSOMAL SUBUNIT PROTEIN UL29C"/>
    <property type="match status" value="1"/>
</dbReference>
<dbReference type="Pfam" id="PF00831">
    <property type="entry name" value="Ribosomal_L29"/>
    <property type="match status" value="1"/>
</dbReference>
<dbReference type="SUPFAM" id="SSF46561">
    <property type="entry name" value="Ribosomal protein L29 (L29p)"/>
    <property type="match status" value="1"/>
</dbReference>
<dbReference type="PROSITE" id="PS00579">
    <property type="entry name" value="RIBOSOMAL_L29"/>
    <property type="match status" value="1"/>
</dbReference>
<gene>
    <name evidence="1" type="primary">rpmC</name>
    <name type="ordered locus">cgR_0616</name>
</gene>
<keyword id="KW-0687">Ribonucleoprotein</keyword>
<keyword id="KW-0689">Ribosomal protein</keyword>